<reference key="1">
    <citation type="journal article" date="2006" name="BMC Genomics">
        <title>Comparative genome analysis: selection pressure on the Borrelia vls cassettes is essential for infectivity.</title>
        <authorList>
            <person name="Gloeckner G."/>
            <person name="Schulte-Spechtel U."/>
            <person name="Schilhabel M."/>
            <person name="Felder M."/>
            <person name="Suehnel J."/>
            <person name="Wilske B."/>
            <person name="Platzer M."/>
        </authorList>
    </citation>
    <scope>NUCLEOTIDE SEQUENCE [LARGE SCALE GENOMIC DNA]</scope>
    <source>
        <strain>PKo</strain>
    </source>
</reference>
<reference key="2">
    <citation type="journal article" date="2011" name="J. Bacteriol.">
        <title>Whole-genome sequences of two Borrelia afzelii and two Borrelia garinii Lyme disease agent isolates.</title>
        <authorList>
            <person name="Casjens S.R."/>
            <person name="Mongodin E.F."/>
            <person name="Qiu W.G."/>
            <person name="Dunn J.J."/>
            <person name="Luft B.J."/>
            <person name="Fraser-Liggett C.M."/>
            <person name="Schutzer S.E."/>
        </authorList>
    </citation>
    <scope>NUCLEOTIDE SEQUENCE [LARGE SCALE GENOMIC DNA]</scope>
    <source>
        <strain>PKo</strain>
    </source>
</reference>
<dbReference type="EMBL" id="CP000395">
    <property type="protein sequence ID" value="ABH01604.1"/>
    <property type="molecule type" value="Genomic_DNA"/>
</dbReference>
<dbReference type="EMBL" id="CP002933">
    <property type="protein sequence ID" value="AEL69564.1"/>
    <property type="molecule type" value="Genomic_DNA"/>
</dbReference>
<dbReference type="RefSeq" id="WP_004790427.1">
    <property type="nucleotide sequence ID" value="NZ_CP160066.1"/>
</dbReference>
<dbReference type="SMR" id="Q0SNH4"/>
<dbReference type="STRING" id="29518.BLA32_02620"/>
<dbReference type="GeneID" id="77265175"/>
<dbReference type="KEGG" id="baf:BAPKO_0347"/>
<dbReference type="KEGG" id="bafz:BafPKo_0338"/>
<dbReference type="PATRIC" id="fig|390236.22.peg.331"/>
<dbReference type="eggNOG" id="COG0103">
    <property type="taxonomic scope" value="Bacteria"/>
</dbReference>
<dbReference type="HOGENOM" id="CLU_046483_2_1_12"/>
<dbReference type="OrthoDB" id="9803965at2"/>
<dbReference type="Proteomes" id="UP000005216">
    <property type="component" value="Chromosome"/>
</dbReference>
<dbReference type="GO" id="GO:0022627">
    <property type="term" value="C:cytosolic small ribosomal subunit"/>
    <property type="evidence" value="ECO:0007669"/>
    <property type="project" value="TreeGrafter"/>
</dbReference>
<dbReference type="GO" id="GO:0003723">
    <property type="term" value="F:RNA binding"/>
    <property type="evidence" value="ECO:0007669"/>
    <property type="project" value="TreeGrafter"/>
</dbReference>
<dbReference type="GO" id="GO:0003735">
    <property type="term" value="F:structural constituent of ribosome"/>
    <property type="evidence" value="ECO:0007669"/>
    <property type="project" value="InterPro"/>
</dbReference>
<dbReference type="GO" id="GO:0006412">
    <property type="term" value="P:translation"/>
    <property type="evidence" value="ECO:0007669"/>
    <property type="project" value="UniProtKB-UniRule"/>
</dbReference>
<dbReference type="FunFam" id="3.30.230.10:FF:000001">
    <property type="entry name" value="30S ribosomal protein S9"/>
    <property type="match status" value="1"/>
</dbReference>
<dbReference type="Gene3D" id="3.30.230.10">
    <property type="match status" value="1"/>
</dbReference>
<dbReference type="HAMAP" id="MF_00532_B">
    <property type="entry name" value="Ribosomal_uS9_B"/>
    <property type="match status" value="1"/>
</dbReference>
<dbReference type="InterPro" id="IPR020568">
    <property type="entry name" value="Ribosomal_Su5_D2-typ_SF"/>
</dbReference>
<dbReference type="InterPro" id="IPR000754">
    <property type="entry name" value="Ribosomal_uS9"/>
</dbReference>
<dbReference type="InterPro" id="IPR023035">
    <property type="entry name" value="Ribosomal_uS9_bac/plastid"/>
</dbReference>
<dbReference type="InterPro" id="IPR020574">
    <property type="entry name" value="Ribosomal_uS9_CS"/>
</dbReference>
<dbReference type="InterPro" id="IPR014721">
    <property type="entry name" value="Ribsml_uS5_D2-typ_fold_subgr"/>
</dbReference>
<dbReference type="NCBIfam" id="NF001099">
    <property type="entry name" value="PRK00132.1"/>
    <property type="match status" value="1"/>
</dbReference>
<dbReference type="PANTHER" id="PTHR21569">
    <property type="entry name" value="RIBOSOMAL PROTEIN S9"/>
    <property type="match status" value="1"/>
</dbReference>
<dbReference type="PANTHER" id="PTHR21569:SF1">
    <property type="entry name" value="SMALL RIBOSOMAL SUBUNIT PROTEIN US9M"/>
    <property type="match status" value="1"/>
</dbReference>
<dbReference type="Pfam" id="PF00380">
    <property type="entry name" value="Ribosomal_S9"/>
    <property type="match status" value="1"/>
</dbReference>
<dbReference type="SUPFAM" id="SSF54211">
    <property type="entry name" value="Ribosomal protein S5 domain 2-like"/>
    <property type="match status" value="1"/>
</dbReference>
<dbReference type="PROSITE" id="PS00360">
    <property type="entry name" value="RIBOSOMAL_S9"/>
    <property type="match status" value="1"/>
</dbReference>
<proteinExistence type="inferred from homology"/>
<sequence length="136" mass="15418">MKKSNFSNVNLSMGTGRRKSSVARVYIREGSGNIKVNNRDFDSYIQLENLRTMALSPLVLTNTLGKYDLYINVYGGGISGQSGAIRHGISRALFELDESNKMILRSNGFLTRDSRKVERKKFGQKKARKSFQFSKR</sequence>
<organism>
    <name type="scientific">Borreliella afzelii (strain PKo)</name>
    <name type="common">Borrelia afzelii</name>
    <dbReference type="NCBI Taxonomy" id="390236"/>
    <lineage>
        <taxon>Bacteria</taxon>
        <taxon>Pseudomonadati</taxon>
        <taxon>Spirochaetota</taxon>
        <taxon>Spirochaetia</taxon>
        <taxon>Spirochaetales</taxon>
        <taxon>Borreliaceae</taxon>
        <taxon>Borreliella</taxon>
    </lineage>
</organism>
<keyword id="KW-0687">Ribonucleoprotein</keyword>
<keyword id="KW-0689">Ribosomal protein</keyword>
<gene>
    <name evidence="1" type="primary">rpsI</name>
    <name type="ordered locus">BAPKO_0347</name>
    <name type="ordered locus">BafPKo_0338</name>
</gene>
<accession>Q0SNH4</accession>
<accession>G0IRQ4</accession>
<feature type="chain" id="PRO_1000051173" description="Small ribosomal subunit protein uS9">
    <location>
        <begin position="1"/>
        <end position="136"/>
    </location>
</feature>
<name>RS9_BORAP</name>
<comment type="similarity">
    <text evidence="1">Belongs to the universal ribosomal protein uS9 family.</text>
</comment>
<protein>
    <recommendedName>
        <fullName evidence="1">Small ribosomal subunit protein uS9</fullName>
    </recommendedName>
    <alternativeName>
        <fullName evidence="2">30S ribosomal protein S9</fullName>
    </alternativeName>
</protein>
<evidence type="ECO:0000255" key="1">
    <source>
        <dbReference type="HAMAP-Rule" id="MF_00532"/>
    </source>
</evidence>
<evidence type="ECO:0000305" key="2"/>